<feature type="chain" id="PRO_1000145198" description="Urease accessory protein UreG">
    <location>
        <begin position="1"/>
        <end position="238"/>
    </location>
</feature>
<feature type="region of interest" description="Disordered" evidence="2">
    <location>
        <begin position="1"/>
        <end position="27"/>
    </location>
</feature>
<feature type="compositionally biased region" description="Basic and acidic residues" evidence="2">
    <location>
        <begin position="1"/>
        <end position="15"/>
    </location>
</feature>
<feature type="binding site" evidence="1">
    <location>
        <begin position="34"/>
        <end position="41"/>
    </location>
    <ligand>
        <name>GTP</name>
        <dbReference type="ChEBI" id="CHEBI:37565"/>
    </ligand>
</feature>
<comment type="function">
    <text evidence="1">Facilitates the functional incorporation of the urease nickel metallocenter. This process requires GTP hydrolysis, probably effectuated by UreG.</text>
</comment>
<comment type="subunit">
    <text evidence="1">Homodimer. UreD, UreF and UreG form a complex that acts as a GTP-hydrolysis-dependent molecular chaperone, activating the urease apoprotein by helping to assemble the nickel containing metallocenter of UreC. The UreE protein probably delivers the nickel.</text>
</comment>
<comment type="subcellular location">
    <subcellularLocation>
        <location evidence="1">Cytoplasm</location>
    </subcellularLocation>
</comment>
<comment type="similarity">
    <text evidence="1">Belongs to the SIMIBI class G3E GTPase family. UreG subfamily.</text>
</comment>
<name>UREG_NOCFA</name>
<sequence>MPPHLIDGEPHDHAHDRPKRQRTPGEPLRIGIGGPVGSGKTALVAALCKQLREELSLAVLTNDIYTTEDADFLRRHAVLPDERITAVQTGGCPHTAIRDDITANLDAIDDLIAANPPLDLILVESGGDNLTATFSSGLIDVQIFVIDVAGGDKVPRKGGPGVTYSDLLVVNKTDLAPLVGADLGVMERDAAKVRQGRPTALISLTDDPAATPVLAWVREQLAAIAEADRHGAASGIAH</sequence>
<accession>Q5YWQ4</accession>
<protein>
    <recommendedName>
        <fullName evidence="1">Urease accessory protein UreG</fullName>
    </recommendedName>
</protein>
<evidence type="ECO:0000255" key="1">
    <source>
        <dbReference type="HAMAP-Rule" id="MF_01389"/>
    </source>
</evidence>
<evidence type="ECO:0000256" key="2">
    <source>
        <dbReference type="SAM" id="MobiDB-lite"/>
    </source>
</evidence>
<keyword id="KW-0143">Chaperone</keyword>
<keyword id="KW-0963">Cytoplasm</keyword>
<keyword id="KW-0342">GTP-binding</keyword>
<keyword id="KW-0996">Nickel insertion</keyword>
<keyword id="KW-0547">Nucleotide-binding</keyword>
<keyword id="KW-1185">Reference proteome</keyword>
<reference key="1">
    <citation type="journal article" date="2004" name="Proc. Natl. Acad. Sci. U.S.A.">
        <title>The complete genomic sequence of Nocardia farcinica IFM 10152.</title>
        <authorList>
            <person name="Ishikawa J."/>
            <person name="Yamashita A."/>
            <person name="Mikami Y."/>
            <person name="Hoshino Y."/>
            <person name="Kurita H."/>
            <person name="Hotta K."/>
            <person name="Shiba T."/>
            <person name="Hattori M."/>
        </authorList>
    </citation>
    <scope>NUCLEOTIDE SEQUENCE [LARGE SCALE GENOMIC DNA]</scope>
    <source>
        <strain>IFM 10152</strain>
    </source>
</reference>
<gene>
    <name evidence="1" type="primary">ureG</name>
    <name type="ordered locus">NFA_25400</name>
</gene>
<dbReference type="EMBL" id="AP006618">
    <property type="protein sequence ID" value="BAD57387.1"/>
    <property type="molecule type" value="Genomic_DNA"/>
</dbReference>
<dbReference type="RefSeq" id="WP_011209072.1">
    <property type="nucleotide sequence ID" value="NC_006361.1"/>
</dbReference>
<dbReference type="SMR" id="Q5YWQ4"/>
<dbReference type="STRING" id="247156.NFA_25400"/>
<dbReference type="GeneID" id="61133283"/>
<dbReference type="KEGG" id="nfa:NFA_25400"/>
<dbReference type="eggNOG" id="COG0378">
    <property type="taxonomic scope" value="Bacteria"/>
</dbReference>
<dbReference type="HOGENOM" id="CLU_072144_1_0_11"/>
<dbReference type="OrthoDB" id="9802035at2"/>
<dbReference type="Proteomes" id="UP000006820">
    <property type="component" value="Chromosome"/>
</dbReference>
<dbReference type="GO" id="GO:0005737">
    <property type="term" value="C:cytoplasm"/>
    <property type="evidence" value="ECO:0007669"/>
    <property type="project" value="UniProtKB-SubCell"/>
</dbReference>
<dbReference type="GO" id="GO:0005525">
    <property type="term" value="F:GTP binding"/>
    <property type="evidence" value="ECO:0007669"/>
    <property type="project" value="UniProtKB-KW"/>
</dbReference>
<dbReference type="GO" id="GO:0003924">
    <property type="term" value="F:GTPase activity"/>
    <property type="evidence" value="ECO:0007669"/>
    <property type="project" value="InterPro"/>
</dbReference>
<dbReference type="GO" id="GO:0016151">
    <property type="term" value="F:nickel cation binding"/>
    <property type="evidence" value="ECO:0007669"/>
    <property type="project" value="UniProtKB-UniRule"/>
</dbReference>
<dbReference type="GO" id="GO:0043419">
    <property type="term" value="P:urea catabolic process"/>
    <property type="evidence" value="ECO:0007669"/>
    <property type="project" value="InterPro"/>
</dbReference>
<dbReference type="CDD" id="cd05540">
    <property type="entry name" value="UreG"/>
    <property type="match status" value="1"/>
</dbReference>
<dbReference type="FunFam" id="3.40.50.300:FF:000208">
    <property type="entry name" value="Urease accessory protein UreG"/>
    <property type="match status" value="1"/>
</dbReference>
<dbReference type="Gene3D" id="3.40.50.300">
    <property type="entry name" value="P-loop containing nucleotide triphosphate hydrolases"/>
    <property type="match status" value="1"/>
</dbReference>
<dbReference type="HAMAP" id="MF_01389">
    <property type="entry name" value="UreG"/>
    <property type="match status" value="1"/>
</dbReference>
<dbReference type="InterPro" id="IPR003495">
    <property type="entry name" value="CobW/HypB/UreG_nucleotide-bd"/>
</dbReference>
<dbReference type="InterPro" id="IPR027417">
    <property type="entry name" value="P-loop_NTPase"/>
</dbReference>
<dbReference type="InterPro" id="IPR004400">
    <property type="entry name" value="UreG"/>
</dbReference>
<dbReference type="NCBIfam" id="TIGR00101">
    <property type="entry name" value="ureG"/>
    <property type="match status" value="1"/>
</dbReference>
<dbReference type="PANTHER" id="PTHR31715">
    <property type="entry name" value="UREASE ACCESSORY PROTEIN G"/>
    <property type="match status" value="1"/>
</dbReference>
<dbReference type="PANTHER" id="PTHR31715:SF0">
    <property type="entry name" value="UREASE ACCESSORY PROTEIN G"/>
    <property type="match status" value="1"/>
</dbReference>
<dbReference type="Pfam" id="PF02492">
    <property type="entry name" value="cobW"/>
    <property type="match status" value="1"/>
</dbReference>
<dbReference type="PIRSF" id="PIRSF005624">
    <property type="entry name" value="Ni-bind_GTPase"/>
    <property type="match status" value="1"/>
</dbReference>
<dbReference type="SUPFAM" id="SSF52540">
    <property type="entry name" value="P-loop containing nucleoside triphosphate hydrolases"/>
    <property type="match status" value="1"/>
</dbReference>
<organism>
    <name type="scientific">Nocardia farcinica (strain IFM 10152)</name>
    <dbReference type="NCBI Taxonomy" id="247156"/>
    <lineage>
        <taxon>Bacteria</taxon>
        <taxon>Bacillati</taxon>
        <taxon>Actinomycetota</taxon>
        <taxon>Actinomycetes</taxon>
        <taxon>Mycobacteriales</taxon>
        <taxon>Nocardiaceae</taxon>
        <taxon>Nocardia</taxon>
    </lineage>
</organism>
<proteinExistence type="inferred from homology"/>